<sequence>MFEISFYIALKNFNSLGILKMWRFI</sequence>
<geneLocation type="chloroplast"/>
<proteinExistence type="predicted"/>
<reference key="1">
    <citation type="journal article" date="1995" name="Plant Mol. Biol. Rep.">
        <title>The chloroplast genome of a chlorophyll a+c-containing alga, Odontella sinensis.</title>
        <authorList>
            <person name="Kowallik K.V."/>
            <person name="Stoebe B."/>
            <person name="Schaffran I."/>
            <person name="Kroth-Pancic P."/>
            <person name="Freier U."/>
        </authorList>
    </citation>
    <scope>NUCLEOTIDE SEQUENCE [LARGE SCALE GENOMIC DNA]</scope>
</reference>
<comment type="subcellular location">
    <subcellularLocation>
        <location>Plastid</location>
        <location>Chloroplast</location>
    </subcellularLocation>
</comment>
<feature type="chain" id="PRO_0000217460" description="Uncharacterized 3.1 kDa protein in psbJ-trnE intergenic region">
    <location>
        <begin position="1"/>
        <end position="25"/>
    </location>
</feature>
<keyword id="KW-0150">Chloroplast</keyword>
<keyword id="KW-0934">Plastid</keyword>
<name>YCX8_TRICV</name>
<organism>
    <name type="scientific">Trieres chinensis</name>
    <name type="common">Marine centric diatom</name>
    <name type="synonym">Odontella sinensis</name>
    <dbReference type="NCBI Taxonomy" id="1514140"/>
    <lineage>
        <taxon>Eukaryota</taxon>
        <taxon>Sar</taxon>
        <taxon>Stramenopiles</taxon>
        <taxon>Ochrophyta</taxon>
        <taxon>Bacillariophyta</taxon>
        <taxon>Mediophyceae</taxon>
        <taxon>Biddulphiophycidae</taxon>
        <taxon>Eupodiscales</taxon>
        <taxon>Parodontellaceae</taxon>
        <taxon>Trieres</taxon>
    </lineage>
</organism>
<protein>
    <recommendedName>
        <fullName>Uncharacterized 3.1 kDa protein in psbJ-trnE intergenic region</fullName>
    </recommendedName>
    <alternativeName>
        <fullName>ORF25</fullName>
    </alternativeName>
</protein>
<dbReference type="EMBL" id="Z67753">
    <property type="protein sequence ID" value="CAA91716.1"/>
    <property type="molecule type" value="Genomic_DNA"/>
</dbReference>
<dbReference type="PIR" id="S78343">
    <property type="entry name" value="S78343"/>
</dbReference>
<dbReference type="RefSeq" id="NP_043684.1">
    <property type="nucleotide sequence ID" value="NC_001713.1"/>
</dbReference>
<dbReference type="GeneID" id="1457270"/>
<dbReference type="GO" id="GO:0009507">
    <property type="term" value="C:chloroplast"/>
    <property type="evidence" value="ECO:0007669"/>
    <property type="project" value="UniProtKB-SubCell"/>
</dbReference>
<accession>P49834</accession>